<comment type="function">
    <text evidence="3">Mediates visceral muscle contractile activity (myotropic activity).</text>
</comment>
<comment type="subcellular location">
    <subcellularLocation>
        <location evidence="3">Secreted</location>
    </subcellularLocation>
</comment>
<comment type="tissue specificity">
    <text evidence="1">Dorsal ganglionic sheath of fused ventral nerve cord.</text>
</comment>
<comment type="mass spectrometry"/>
<comment type="similarity">
    <text evidence="2">Belongs to the periviscerokinin family.</text>
</comment>
<feature type="peptide" id="PRO_0000044247" description="Periviscerokinin-1">
    <location>
        <begin position="1"/>
        <end position="13"/>
    </location>
</feature>
<feature type="modified residue" description="Valine amide" evidence="1">
    <location>
        <position position="13"/>
    </location>
</feature>
<feature type="unsure residue" description="L or I" evidence="1">
    <location>
        <position position="7"/>
    </location>
</feature>
<protein>
    <recommendedName>
        <fullName>Periviscerokinin-1</fullName>
    </recommendedName>
    <alternativeName>
        <fullName>Musdo-PVK-1</fullName>
    </alternativeName>
</protein>
<keyword id="KW-0027">Amidation</keyword>
<keyword id="KW-0903">Direct protein sequencing</keyword>
<keyword id="KW-0527">Neuropeptide</keyword>
<keyword id="KW-1185">Reference proteome</keyword>
<keyword id="KW-0964">Secreted</keyword>
<sequence>AGGTSGLYAFPRV</sequence>
<name>PVK1_MUSDO</name>
<proteinExistence type="evidence at protein level"/>
<accession>P84354</accession>
<evidence type="ECO:0000269" key="1">
    <source>
    </source>
</evidence>
<evidence type="ECO:0000303" key="2">
    <source>
    </source>
</evidence>
<evidence type="ECO:0000305" key="3"/>
<organism>
    <name type="scientific">Musca domestica</name>
    <name type="common">House fly</name>
    <dbReference type="NCBI Taxonomy" id="7370"/>
    <lineage>
        <taxon>Eukaryota</taxon>
        <taxon>Metazoa</taxon>
        <taxon>Ecdysozoa</taxon>
        <taxon>Arthropoda</taxon>
        <taxon>Hexapoda</taxon>
        <taxon>Insecta</taxon>
        <taxon>Pterygota</taxon>
        <taxon>Neoptera</taxon>
        <taxon>Endopterygota</taxon>
        <taxon>Diptera</taxon>
        <taxon>Brachycera</taxon>
        <taxon>Muscomorpha</taxon>
        <taxon>Muscoidea</taxon>
        <taxon>Muscidae</taxon>
        <taxon>Musca</taxon>
    </lineage>
</organism>
<dbReference type="Proteomes" id="UP000694905">
    <property type="component" value="Unplaced"/>
</dbReference>
<dbReference type="GO" id="GO:0005576">
    <property type="term" value="C:extracellular region"/>
    <property type="evidence" value="ECO:0007669"/>
    <property type="project" value="UniProtKB-SubCell"/>
</dbReference>
<dbReference type="GO" id="GO:0007218">
    <property type="term" value="P:neuropeptide signaling pathway"/>
    <property type="evidence" value="ECO:0007669"/>
    <property type="project" value="UniProtKB-KW"/>
</dbReference>
<dbReference type="InterPro" id="IPR013231">
    <property type="entry name" value="Periviscerokinin"/>
</dbReference>
<dbReference type="Pfam" id="PF08259">
    <property type="entry name" value="Periviscerokin"/>
    <property type="match status" value="1"/>
</dbReference>
<reference evidence="3" key="1">
    <citation type="journal article" date="2003" name="Peptides">
        <title>Mass spectrometric analysis of putative capa-gene products in Musca domestica and Neobellieria bullata.</title>
        <authorList>
            <person name="Predel R."/>
            <person name="Russell W.K."/>
            <person name="Tichy S.E."/>
            <person name="Russell D.H."/>
            <person name="Nachman R.J."/>
        </authorList>
    </citation>
    <scope>PROTEIN SEQUENCE</scope>
    <scope>TISSUE SPECIFICITY</scope>
    <scope>MASS SPECTROMETRY</scope>
    <scope>AMIDATION AT VAL-13</scope>
    <source>
        <tissue evidence="1">Ganglion</tissue>
    </source>
</reference>